<comment type="function">
    <text evidence="1">Heme chaperone required for the biogenesis of c-type cytochromes. Transiently binds heme delivered by CcmC and transfers the heme to apo-cytochromes in a process facilitated by CcmF and CcmH.</text>
</comment>
<comment type="subcellular location">
    <subcellularLocation>
        <location evidence="1">Cell inner membrane</location>
        <topology evidence="1">Single-pass type II membrane protein</topology>
        <orientation evidence="1">Periplasmic side</orientation>
    </subcellularLocation>
</comment>
<comment type="similarity">
    <text evidence="1">Belongs to the CcmE/CycJ family.</text>
</comment>
<organism>
    <name type="scientific">Escherichia coli O17:K52:H18 (strain UMN026 / ExPEC)</name>
    <dbReference type="NCBI Taxonomy" id="585056"/>
    <lineage>
        <taxon>Bacteria</taxon>
        <taxon>Pseudomonadati</taxon>
        <taxon>Pseudomonadota</taxon>
        <taxon>Gammaproteobacteria</taxon>
        <taxon>Enterobacterales</taxon>
        <taxon>Enterobacteriaceae</taxon>
        <taxon>Escherichia</taxon>
    </lineage>
</organism>
<evidence type="ECO:0000255" key="1">
    <source>
        <dbReference type="HAMAP-Rule" id="MF_01959"/>
    </source>
</evidence>
<evidence type="ECO:0000256" key="2">
    <source>
        <dbReference type="SAM" id="MobiDB-lite"/>
    </source>
</evidence>
<protein>
    <recommendedName>
        <fullName evidence="1">Cytochrome c-type biogenesis protein CcmE</fullName>
    </recommendedName>
    <alternativeName>
        <fullName evidence="1">Cytochrome c maturation protein E</fullName>
    </alternativeName>
    <alternativeName>
        <fullName evidence="1">Heme chaperone CcmE</fullName>
    </alternativeName>
</protein>
<sequence>MNIRRKNRLWIACAVLAGLALTIGLVLYALRSNIDLFYTPGEILYGKRETQQMPEVGQRLRVGGMVMPGSVQRDPNSLKVTFTIYDAEGSVDVSYEGILPDLFREGQGVVVQGELEKGNHILAKEVLAKHDENYTPPEVEKAMEANHRRPASVYKDPAS</sequence>
<gene>
    <name evidence="1" type="primary">ccmE</name>
    <name evidence="1" type="synonym">cycJ</name>
    <name type="ordered locus">ECUMN_2532</name>
</gene>
<accession>B7N5F8</accession>
<proteinExistence type="inferred from homology"/>
<name>CCME_ECOLU</name>
<reference key="1">
    <citation type="journal article" date="2009" name="PLoS Genet.">
        <title>Organised genome dynamics in the Escherichia coli species results in highly diverse adaptive paths.</title>
        <authorList>
            <person name="Touchon M."/>
            <person name="Hoede C."/>
            <person name="Tenaillon O."/>
            <person name="Barbe V."/>
            <person name="Baeriswyl S."/>
            <person name="Bidet P."/>
            <person name="Bingen E."/>
            <person name="Bonacorsi S."/>
            <person name="Bouchier C."/>
            <person name="Bouvet O."/>
            <person name="Calteau A."/>
            <person name="Chiapello H."/>
            <person name="Clermont O."/>
            <person name="Cruveiller S."/>
            <person name="Danchin A."/>
            <person name="Diard M."/>
            <person name="Dossat C."/>
            <person name="Karoui M.E."/>
            <person name="Frapy E."/>
            <person name="Garry L."/>
            <person name="Ghigo J.M."/>
            <person name="Gilles A.M."/>
            <person name="Johnson J."/>
            <person name="Le Bouguenec C."/>
            <person name="Lescat M."/>
            <person name="Mangenot S."/>
            <person name="Martinez-Jehanne V."/>
            <person name="Matic I."/>
            <person name="Nassif X."/>
            <person name="Oztas S."/>
            <person name="Petit M.A."/>
            <person name="Pichon C."/>
            <person name="Rouy Z."/>
            <person name="Ruf C.S."/>
            <person name="Schneider D."/>
            <person name="Tourret J."/>
            <person name="Vacherie B."/>
            <person name="Vallenet D."/>
            <person name="Medigue C."/>
            <person name="Rocha E.P.C."/>
            <person name="Denamur E."/>
        </authorList>
    </citation>
    <scope>NUCLEOTIDE SEQUENCE [LARGE SCALE GENOMIC DNA]</scope>
    <source>
        <strain>UMN026 / ExPEC</strain>
    </source>
</reference>
<keyword id="KW-0997">Cell inner membrane</keyword>
<keyword id="KW-1003">Cell membrane</keyword>
<keyword id="KW-0201">Cytochrome c-type biogenesis</keyword>
<keyword id="KW-0349">Heme</keyword>
<keyword id="KW-0408">Iron</keyword>
<keyword id="KW-0472">Membrane</keyword>
<keyword id="KW-0479">Metal-binding</keyword>
<keyword id="KW-0735">Signal-anchor</keyword>
<keyword id="KW-0812">Transmembrane</keyword>
<keyword id="KW-1133">Transmembrane helix</keyword>
<feature type="chain" id="PRO_1000189020" description="Cytochrome c-type biogenesis protein CcmE">
    <location>
        <begin position="1"/>
        <end position="159"/>
    </location>
</feature>
<feature type="topological domain" description="Cytoplasmic" evidence="1">
    <location>
        <begin position="1"/>
        <end position="8"/>
    </location>
</feature>
<feature type="transmembrane region" description="Helical; Signal-anchor for type II membrane protein" evidence="1">
    <location>
        <begin position="9"/>
        <end position="29"/>
    </location>
</feature>
<feature type="topological domain" description="Periplasmic" evidence="1">
    <location>
        <begin position="30"/>
        <end position="159"/>
    </location>
</feature>
<feature type="region of interest" description="Disordered" evidence="2">
    <location>
        <begin position="132"/>
        <end position="159"/>
    </location>
</feature>
<feature type="compositionally biased region" description="Basic and acidic residues" evidence="2">
    <location>
        <begin position="132"/>
        <end position="147"/>
    </location>
</feature>
<feature type="binding site" description="covalent" evidence="1">
    <location>
        <position position="130"/>
    </location>
    <ligand>
        <name>heme</name>
        <dbReference type="ChEBI" id="CHEBI:30413"/>
    </ligand>
</feature>
<feature type="binding site" description="axial binding residue" evidence="1">
    <location>
        <position position="134"/>
    </location>
    <ligand>
        <name>heme</name>
        <dbReference type="ChEBI" id="CHEBI:30413"/>
    </ligand>
    <ligandPart>
        <name>Fe</name>
        <dbReference type="ChEBI" id="CHEBI:18248"/>
    </ligandPart>
</feature>
<dbReference type="EMBL" id="CU928163">
    <property type="protein sequence ID" value="CAR13717.1"/>
    <property type="molecule type" value="Genomic_DNA"/>
</dbReference>
<dbReference type="RefSeq" id="WP_001026418.1">
    <property type="nucleotide sequence ID" value="NC_011751.1"/>
</dbReference>
<dbReference type="RefSeq" id="YP_002413245.1">
    <property type="nucleotide sequence ID" value="NC_011751.1"/>
</dbReference>
<dbReference type="SMR" id="B7N5F8"/>
<dbReference type="STRING" id="585056.ECUMN_2532"/>
<dbReference type="GeneID" id="86860369"/>
<dbReference type="KEGG" id="eum:ECUMN_2532"/>
<dbReference type="PATRIC" id="fig|585056.7.peg.2715"/>
<dbReference type="HOGENOM" id="CLU_079503_1_0_6"/>
<dbReference type="Proteomes" id="UP000007097">
    <property type="component" value="Chromosome"/>
</dbReference>
<dbReference type="GO" id="GO:0005886">
    <property type="term" value="C:plasma membrane"/>
    <property type="evidence" value="ECO:0007669"/>
    <property type="project" value="UniProtKB-SubCell"/>
</dbReference>
<dbReference type="GO" id="GO:0020037">
    <property type="term" value="F:heme binding"/>
    <property type="evidence" value="ECO:0007669"/>
    <property type="project" value="InterPro"/>
</dbReference>
<dbReference type="GO" id="GO:0046872">
    <property type="term" value="F:metal ion binding"/>
    <property type="evidence" value="ECO:0007669"/>
    <property type="project" value="UniProtKB-KW"/>
</dbReference>
<dbReference type="GO" id="GO:0017004">
    <property type="term" value="P:cytochrome complex assembly"/>
    <property type="evidence" value="ECO:0007669"/>
    <property type="project" value="UniProtKB-KW"/>
</dbReference>
<dbReference type="FunFam" id="2.40.50.140:FF:000104">
    <property type="entry name" value="Cytochrome c-type biogenesis protein CcmE"/>
    <property type="match status" value="1"/>
</dbReference>
<dbReference type="Gene3D" id="2.40.50.140">
    <property type="entry name" value="Nucleic acid-binding proteins"/>
    <property type="match status" value="1"/>
</dbReference>
<dbReference type="HAMAP" id="MF_01959">
    <property type="entry name" value="CcmE"/>
    <property type="match status" value="1"/>
</dbReference>
<dbReference type="InterPro" id="IPR004329">
    <property type="entry name" value="CcmE"/>
</dbReference>
<dbReference type="InterPro" id="IPR036127">
    <property type="entry name" value="CcmE-like_sf"/>
</dbReference>
<dbReference type="InterPro" id="IPR012340">
    <property type="entry name" value="NA-bd_OB-fold"/>
</dbReference>
<dbReference type="NCBIfam" id="NF009635">
    <property type="entry name" value="PRK13150.1"/>
    <property type="match status" value="1"/>
</dbReference>
<dbReference type="NCBIfam" id="NF009638">
    <property type="entry name" value="PRK13165.1"/>
    <property type="match status" value="1"/>
</dbReference>
<dbReference type="NCBIfam" id="NF009727">
    <property type="entry name" value="PRK13254.1-1"/>
    <property type="match status" value="1"/>
</dbReference>
<dbReference type="NCBIfam" id="NF009729">
    <property type="entry name" value="PRK13254.1-3"/>
    <property type="match status" value="1"/>
</dbReference>
<dbReference type="PANTHER" id="PTHR34128">
    <property type="entry name" value="CYTOCHROME C-TYPE BIOGENESIS PROTEIN CCME HOMOLOG, MITOCHONDRIAL"/>
    <property type="match status" value="1"/>
</dbReference>
<dbReference type="PANTHER" id="PTHR34128:SF2">
    <property type="entry name" value="CYTOCHROME C-TYPE BIOGENESIS PROTEIN CCME HOMOLOG, MITOCHONDRIAL"/>
    <property type="match status" value="1"/>
</dbReference>
<dbReference type="Pfam" id="PF03100">
    <property type="entry name" value="CcmE"/>
    <property type="match status" value="1"/>
</dbReference>
<dbReference type="SUPFAM" id="SSF82093">
    <property type="entry name" value="Heme chaperone CcmE"/>
    <property type="match status" value="1"/>
</dbReference>